<keyword id="KW-0007">Acetylation</keyword>
<keyword id="KW-0158">Chromosome</keyword>
<keyword id="KW-0238">DNA-binding</keyword>
<keyword id="KW-1017">Isopeptide bond</keyword>
<keyword id="KW-0544">Nucleosome core</keyword>
<keyword id="KW-0539">Nucleus</keyword>
<keyword id="KW-0832">Ubl conjugation</keyword>
<dbReference type="EMBL" id="AY316539">
    <property type="protein sequence ID" value="AAP69672.1"/>
    <property type="molecule type" value="Genomic_DNA"/>
</dbReference>
<dbReference type="SMR" id="Q7Z9J4"/>
<dbReference type="VEuPathDB" id="FungiDB:I7I51_05728"/>
<dbReference type="VEuPathDB" id="FungiDB:I7I52_07476"/>
<dbReference type="OMA" id="FCPFAIR"/>
<dbReference type="OrthoDB" id="10254238at2759"/>
<dbReference type="GO" id="GO:0005737">
    <property type="term" value="C:cytoplasm"/>
    <property type="evidence" value="ECO:0000314"/>
    <property type="project" value="CAFA"/>
</dbReference>
<dbReference type="GO" id="GO:0009277">
    <property type="term" value="C:fungal-type cell wall"/>
    <property type="evidence" value="ECO:0000314"/>
    <property type="project" value="CAFA"/>
</dbReference>
<dbReference type="GO" id="GO:0000786">
    <property type="term" value="C:nucleosome"/>
    <property type="evidence" value="ECO:0007669"/>
    <property type="project" value="UniProtKB-KW"/>
</dbReference>
<dbReference type="GO" id="GO:0005634">
    <property type="term" value="C:nucleus"/>
    <property type="evidence" value="ECO:0007669"/>
    <property type="project" value="UniProtKB-SubCell"/>
</dbReference>
<dbReference type="GO" id="GO:0003677">
    <property type="term" value="F:DNA binding"/>
    <property type="evidence" value="ECO:0007669"/>
    <property type="project" value="UniProtKB-KW"/>
</dbReference>
<dbReference type="GO" id="GO:0046982">
    <property type="term" value="F:protein heterodimerization activity"/>
    <property type="evidence" value="ECO:0007669"/>
    <property type="project" value="InterPro"/>
</dbReference>
<dbReference type="GO" id="GO:0030527">
    <property type="term" value="F:structural constituent of chromatin"/>
    <property type="evidence" value="ECO:0007669"/>
    <property type="project" value="InterPro"/>
</dbReference>
<dbReference type="CDD" id="cd22910">
    <property type="entry name" value="HFD_H2B"/>
    <property type="match status" value="1"/>
</dbReference>
<dbReference type="FunFam" id="1.10.20.10:FF:000014">
    <property type="entry name" value="Histone H2B"/>
    <property type="match status" value="1"/>
</dbReference>
<dbReference type="Gene3D" id="1.10.20.10">
    <property type="entry name" value="Histone, subunit A"/>
    <property type="match status" value="1"/>
</dbReference>
<dbReference type="InterPro" id="IPR009072">
    <property type="entry name" value="Histone-fold"/>
</dbReference>
<dbReference type="InterPro" id="IPR007125">
    <property type="entry name" value="Histone_H2A/H2B/H3"/>
</dbReference>
<dbReference type="InterPro" id="IPR000558">
    <property type="entry name" value="Histone_H2B"/>
</dbReference>
<dbReference type="InterPro" id="IPR055333">
    <property type="entry name" value="HISTONE_H2B_site"/>
</dbReference>
<dbReference type="PANTHER" id="PTHR23428">
    <property type="entry name" value="HISTONE H2B"/>
    <property type="match status" value="1"/>
</dbReference>
<dbReference type="Pfam" id="PF00125">
    <property type="entry name" value="Histone"/>
    <property type="match status" value="1"/>
</dbReference>
<dbReference type="PRINTS" id="PR00621">
    <property type="entry name" value="HISTONEH2B"/>
</dbReference>
<dbReference type="SMART" id="SM00427">
    <property type="entry name" value="H2B"/>
    <property type="match status" value="1"/>
</dbReference>
<dbReference type="SUPFAM" id="SSF47113">
    <property type="entry name" value="Histone-fold"/>
    <property type="match status" value="1"/>
</dbReference>
<dbReference type="PROSITE" id="PS00357">
    <property type="entry name" value="HISTONE_H2B"/>
    <property type="match status" value="1"/>
</dbReference>
<gene>
    <name type="primary">HTB1</name>
</gene>
<evidence type="ECO:0000250" key="1"/>
<evidence type="ECO:0000256" key="2">
    <source>
        <dbReference type="SAM" id="MobiDB-lite"/>
    </source>
</evidence>
<evidence type="ECO:0000305" key="3"/>
<accession>Q7Z9J4</accession>
<comment type="function">
    <text>Core component of nucleosome. Nucleosomes wrap and compact DNA into chromatin, limiting DNA accessibility to the cellular machineries which require DNA as a template. Histones thereby play a central role in transcription regulation, DNA repair, DNA replication and chromosomal stability. DNA accessibility is regulated via a complex set of post-translational modifications of histones, also called histone code, and nucleosome remodeling.</text>
</comment>
<comment type="subunit">
    <text>The nucleosome is a histone octamer containing two molecules each of H2A, H2B, H3 and H4 assembled in one H3-H4 heterotetramer and two H2A-H2B heterodimers. The octamer wraps approximately 147 bp of DNA.</text>
</comment>
<comment type="subcellular location">
    <subcellularLocation>
        <location evidence="1">Nucleus</location>
    </subcellularLocation>
    <subcellularLocation>
        <location evidence="1">Chromosome</location>
    </subcellularLocation>
</comment>
<comment type="PTM">
    <text evidence="1">Monoubiquitinated to form H2BK123ub1. H2BK123ub1 gives a specific tag for epigenetic transcriptional activation and is also prerequisite for H3K4me and H3K79me formation. H2BK123ub1 also modulates the formation of double-strand breaks during meiosis and is a prerequisite for DNA-damage checkpoint activation (By similarity).</text>
</comment>
<comment type="PTM">
    <text evidence="1">Acetylated by GCN5 to form H2BK11ac and H2BK16ac. H2BK16ac can also be formed by ESA1. Acetylation of N-terminal lysines and particularly formation of H2BK11acK16ac has a positive effect on transcription (By similarity).</text>
</comment>
<comment type="PTM">
    <text evidence="1">Sumoylation to form H2BK6su or H2BK7su, and probably also H2BK16su or H2BK17su, occurs preferentially near the telomeres and represses gene transcription.</text>
</comment>
<comment type="similarity">
    <text evidence="3">Belongs to the histone H2B family.</text>
</comment>
<comment type="caution">
    <text evidence="3">To ensure consistency between histone entries, we follow the 'Brno' nomenclature for histone modifications, with positions referring to those used in the literature for the 'closest' model organism. Due to slight variations in histone sequences between organisms and to the presence of initiator methionine in UniProtKB/Swiss-Prot sequences, the actual positions of modified amino acids in the sequence generally differ. In this entry the following conventions are used: H2BK6ac = acetylated Lys-8; H2BK6su = sumoylated Lys-8; H2BK7ac = acetylated Lys-9; H2BK7su = sumoylated Lys-9; H2BK11ac = acetylated Lys-15; H2BK16ac = acetylated Lys-24; H2BK16su = sumoylated Lys-24; H2BK17su = sumoylated Lys-25; H2BK123ub1 = monoubiquitinated Lys-132.</text>
</comment>
<proteinExistence type="inferred from homology"/>
<sequence>MPPKAAEKKPSTAGKAPAGKAPEKKEAGKKTTAAGGEKKKRSKTRKETYSSYIYKVLKQVHPDTGISNRAMSILNSFVNDIFERVATEASKLAAYNKKSTISSREIQTSVRLILPGELAKHAVSEGTKAVTKYSSSAK</sequence>
<name>H2B_AJECA</name>
<organism>
    <name type="scientific">Ajellomyces capsulatus</name>
    <name type="common">Darling's disease fungus</name>
    <name type="synonym">Histoplasma capsulatum</name>
    <dbReference type="NCBI Taxonomy" id="5037"/>
    <lineage>
        <taxon>Eukaryota</taxon>
        <taxon>Fungi</taxon>
        <taxon>Dikarya</taxon>
        <taxon>Ascomycota</taxon>
        <taxon>Pezizomycotina</taxon>
        <taxon>Eurotiomycetes</taxon>
        <taxon>Eurotiomycetidae</taxon>
        <taxon>Onygenales</taxon>
        <taxon>Ajellomycetaceae</taxon>
        <taxon>Histoplasma</taxon>
    </lineage>
</organism>
<protein>
    <recommendedName>
        <fullName>Histone H2B</fullName>
    </recommendedName>
</protein>
<feature type="initiator methionine" description="Removed" evidence="1">
    <location>
        <position position="1"/>
    </location>
</feature>
<feature type="chain" id="PRO_0000071927" description="Histone H2B">
    <location>
        <begin position="2"/>
        <end position="138"/>
    </location>
</feature>
<feature type="region of interest" description="Disordered" evidence="2">
    <location>
        <begin position="1"/>
        <end position="47"/>
    </location>
</feature>
<feature type="compositionally biased region" description="Basic and acidic residues" evidence="2">
    <location>
        <begin position="1"/>
        <end position="10"/>
    </location>
</feature>
<feature type="compositionally biased region" description="Low complexity" evidence="2">
    <location>
        <begin position="11"/>
        <end position="20"/>
    </location>
</feature>
<feature type="modified residue" description="N6-acetyllysine; alternate" evidence="1">
    <location>
        <position position="8"/>
    </location>
</feature>
<feature type="modified residue" description="N6-acetyllysine; alternate" evidence="1">
    <location>
        <position position="9"/>
    </location>
</feature>
<feature type="modified residue" description="N6-acetyllysine" evidence="1">
    <location>
        <position position="15"/>
    </location>
</feature>
<feature type="modified residue" description="N6-acetyllysine; alternate" evidence="1">
    <location>
        <position position="24"/>
    </location>
</feature>
<feature type="cross-link" description="Glycyl lysine isopeptide (Lys-Gly) (interchain with G-Cter in SUMO); alternate" evidence="1">
    <location>
        <position position="8"/>
    </location>
</feature>
<feature type="cross-link" description="Glycyl lysine isopeptide (Lys-Gly) (interchain with G-Cter in SUMO); alternate" evidence="1">
    <location>
        <position position="9"/>
    </location>
</feature>
<feature type="cross-link" description="Glycyl lysine isopeptide (Lys-Gly) (interchain with G-Cter in SUMO); alternate" evidence="1">
    <location>
        <position position="24"/>
    </location>
</feature>
<feature type="cross-link" description="Glycyl lysine isopeptide (Lys-Gly) (interchain with G-Cter in SUMO)" evidence="1">
    <location>
        <position position="25"/>
    </location>
</feature>
<feature type="cross-link" description="Glycyl lysine isopeptide (Lys-Gly) (interchain with G-Cter in ubiquitin)" evidence="1">
    <location>
        <position position="132"/>
    </location>
</feature>
<reference key="1">
    <citation type="journal article" date="2003" name="J. Clin. Invest.">
        <title>Antibodies to a cell surface histone-like protein protect against Histoplasma capsulatum.</title>
        <authorList>
            <person name="Nosanchuk J.D."/>
            <person name="Steenbergen J.N."/>
            <person name="Shi L."/>
            <person name="Deepe G.S. Jr."/>
            <person name="Casadevall A."/>
        </authorList>
    </citation>
    <scope>NUCLEOTIDE SEQUENCE [GENOMIC DNA]</scope>
    <source>
        <strain>ATCC 26032 / G217B</strain>
    </source>
</reference>